<organism>
    <name type="scientific">African swine fever virus (isolate Warthog/Namibia/Wart80/1980)</name>
    <name type="common">ASFV</name>
    <dbReference type="NCBI Taxonomy" id="561444"/>
    <lineage>
        <taxon>Viruses</taxon>
        <taxon>Varidnaviria</taxon>
        <taxon>Bamfordvirae</taxon>
        <taxon>Nucleocytoviricota</taxon>
        <taxon>Pokkesviricetes</taxon>
        <taxon>Asfuvirales</taxon>
        <taxon>Asfarviridae</taxon>
        <taxon>Asfivirus</taxon>
        <taxon>African swine fever virus</taxon>
    </lineage>
</organism>
<keyword id="KW-1038">Host endoplasmic reticulum</keyword>
<keyword id="KW-1043">Host membrane</keyword>
<keyword id="KW-0414">Isoprene biosynthesis</keyword>
<keyword id="KW-0426">Late protein</keyword>
<keyword id="KW-0460">Magnesium</keyword>
<keyword id="KW-0472">Membrane</keyword>
<keyword id="KW-0479">Metal-binding</keyword>
<keyword id="KW-0808">Transferase</keyword>
<keyword id="KW-0812">Transmembrane</keyword>
<keyword id="KW-1133">Transmembrane helix</keyword>
<accession>P0C9E1</accession>
<dbReference type="EC" id="2.5.1.-"/>
<dbReference type="EC" id="2.5.1.1"/>
<dbReference type="EC" id="2.5.1.29"/>
<dbReference type="EC" id="2.5.1.10"/>
<dbReference type="EMBL" id="AY261366">
    <property type="status" value="NOT_ANNOTATED_CDS"/>
    <property type="molecule type" value="Genomic_DNA"/>
</dbReference>
<dbReference type="SMR" id="P0C9E1"/>
<dbReference type="UniPathway" id="UPA00259">
    <property type="reaction ID" value="UER00368"/>
</dbReference>
<dbReference type="UniPathway" id="UPA00260">
    <property type="reaction ID" value="UER00369"/>
</dbReference>
<dbReference type="UniPathway" id="UPA00389">
    <property type="reaction ID" value="UER00564"/>
</dbReference>
<dbReference type="Proteomes" id="UP000000858">
    <property type="component" value="Segment"/>
</dbReference>
<dbReference type="GO" id="GO:0044165">
    <property type="term" value="C:host cell endoplasmic reticulum"/>
    <property type="evidence" value="ECO:0007669"/>
    <property type="project" value="UniProtKB-SubCell"/>
</dbReference>
<dbReference type="GO" id="GO:0033644">
    <property type="term" value="C:host cell membrane"/>
    <property type="evidence" value="ECO:0007669"/>
    <property type="project" value="UniProtKB-SubCell"/>
</dbReference>
<dbReference type="GO" id="GO:0016020">
    <property type="term" value="C:membrane"/>
    <property type="evidence" value="ECO:0007669"/>
    <property type="project" value="UniProtKB-KW"/>
</dbReference>
<dbReference type="GO" id="GO:0004337">
    <property type="term" value="F:(2E,6E)-farnesyl diphosphate synthase activity"/>
    <property type="evidence" value="ECO:0007669"/>
    <property type="project" value="UniProtKB-EC"/>
</dbReference>
<dbReference type="GO" id="GO:0004161">
    <property type="term" value="F:dimethylallyltranstransferase activity"/>
    <property type="evidence" value="ECO:0007669"/>
    <property type="project" value="UniProtKB-EC"/>
</dbReference>
<dbReference type="GO" id="GO:0044687">
    <property type="term" value="F:geranylfarnesyl diphosphate synthase activity"/>
    <property type="evidence" value="ECO:0007669"/>
    <property type="project" value="RHEA"/>
</dbReference>
<dbReference type="GO" id="GO:0004311">
    <property type="term" value="F:geranylgeranyl diphosphate synthase activity"/>
    <property type="evidence" value="ECO:0007669"/>
    <property type="project" value="UniProtKB-EC"/>
</dbReference>
<dbReference type="GO" id="GO:0046872">
    <property type="term" value="F:metal ion binding"/>
    <property type="evidence" value="ECO:0007669"/>
    <property type="project" value="UniProtKB-KW"/>
</dbReference>
<dbReference type="GO" id="GO:0045337">
    <property type="term" value="P:farnesyl diphosphate biosynthetic process"/>
    <property type="evidence" value="ECO:0007669"/>
    <property type="project" value="UniProtKB-UniPathway"/>
</dbReference>
<dbReference type="GO" id="GO:0033384">
    <property type="term" value="P:geranyl diphosphate biosynthetic process"/>
    <property type="evidence" value="ECO:0007669"/>
    <property type="project" value="UniProtKB-UniPathway"/>
</dbReference>
<dbReference type="GO" id="GO:0033386">
    <property type="term" value="P:geranylgeranyl diphosphate biosynthetic process"/>
    <property type="evidence" value="ECO:0007669"/>
    <property type="project" value="UniProtKB-UniPathway"/>
</dbReference>
<dbReference type="Gene3D" id="1.10.600.10">
    <property type="entry name" value="Farnesyl Diphosphate Synthase"/>
    <property type="match status" value="1"/>
</dbReference>
<dbReference type="InterPro" id="IPR008949">
    <property type="entry name" value="Isoprenoid_synthase_dom_sf"/>
</dbReference>
<dbReference type="InterPro" id="IPR000092">
    <property type="entry name" value="Polyprenyl_synt"/>
</dbReference>
<dbReference type="PANTHER" id="PTHR43281">
    <property type="entry name" value="FARNESYL DIPHOSPHATE SYNTHASE"/>
    <property type="match status" value="1"/>
</dbReference>
<dbReference type="PANTHER" id="PTHR43281:SF1">
    <property type="entry name" value="FARNESYL DIPHOSPHATE SYNTHASE"/>
    <property type="match status" value="1"/>
</dbReference>
<dbReference type="Pfam" id="PF00348">
    <property type="entry name" value="polyprenyl_synt"/>
    <property type="match status" value="1"/>
</dbReference>
<dbReference type="SUPFAM" id="SSF48576">
    <property type="entry name" value="Terpenoid synthases"/>
    <property type="match status" value="1"/>
</dbReference>
<dbReference type="PROSITE" id="PS00444">
    <property type="entry name" value="POLYPRENYL_SYNTHASE_2"/>
    <property type="match status" value="1"/>
</dbReference>
<evidence type="ECO:0000250" key="1"/>
<evidence type="ECO:0000250" key="2">
    <source>
        <dbReference type="UniProtKB" id="P14324"/>
    </source>
</evidence>
<evidence type="ECO:0000250" key="3">
    <source>
        <dbReference type="UniProtKB" id="Q12051"/>
    </source>
</evidence>
<evidence type="ECO:0000255" key="4"/>
<evidence type="ECO:0000305" key="5"/>
<gene>
    <name type="ordered locus">War-084</name>
</gene>
<feature type="chain" id="PRO_0000373159" description="Trans-prenyltransferase">
    <location>
        <begin position="1"/>
        <end position="318"/>
    </location>
</feature>
<feature type="transmembrane region" description="Helical" evidence="4">
    <location>
        <begin position="1"/>
        <end position="21"/>
    </location>
</feature>
<feature type="binding site" evidence="2">
    <location>
        <position position="85"/>
    </location>
    <ligand>
        <name>isopentenyl diphosphate</name>
        <dbReference type="ChEBI" id="CHEBI:128769"/>
    </ligand>
</feature>
<feature type="binding site" evidence="2">
    <location>
        <position position="88"/>
    </location>
    <ligand>
        <name>isopentenyl diphosphate</name>
        <dbReference type="ChEBI" id="CHEBI:128769"/>
    </ligand>
</feature>
<feature type="binding site" evidence="3">
    <location>
        <position position="122"/>
    </location>
    <ligand>
        <name>isopentenyl diphosphate</name>
        <dbReference type="ChEBI" id="CHEBI:128769"/>
    </ligand>
</feature>
<feature type="binding site" evidence="2">
    <location>
        <position position="129"/>
    </location>
    <ligand>
        <name>Mg(2+)</name>
        <dbReference type="ChEBI" id="CHEBI:18420"/>
        <label>1</label>
    </ligand>
</feature>
<feature type="binding site" evidence="2">
    <location>
        <position position="129"/>
    </location>
    <ligand>
        <name>Mg(2+)</name>
        <dbReference type="ChEBI" id="CHEBI:18420"/>
        <label>2</label>
    </ligand>
</feature>
<feature type="binding site" evidence="2">
    <location>
        <position position="135"/>
    </location>
    <ligand>
        <name>Mg(2+)</name>
        <dbReference type="ChEBI" id="CHEBI:18420"/>
        <label>1</label>
    </ligand>
</feature>
<feature type="binding site" evidence="2">
    <location>
        <position position="135"/>
    </location>
    <ligand>
        <name>Mg(2+)</name>
        <dbReference type="ChEBI" id="CHEBI:18420"/>
        <label>2</label>
    </ligand>
</feature>
<feature type="binding site" evidence="1">
    <location>
        <position position="140"/>
    </location>
    <ligand>
        <name>dimethylallyl diphosphate</name>
        <dbReference type="ChEBI" id="CHEBI:57623"/>
    </ligand>
</feature>
<feature type="binding site" evidence="2">
    <location>
        <position position="141"/>
    </location>
    <ligand>
        <name>isopentenyl diphosphate</name>
        <dbReference type="ChEBI" id="CHEBI:128769"/>
    </ligand>
</feature>
<feature type="binding site" evidence="1">
    <location>
        <position position="216"/>
    </location>
    <ligand>
        <name>dimethylallyl diphosphate</name>
        <dbReference type="ChEBI" id="CHEBI:57623"/>
    </ligand>
</feature>
<feature type="binding site" evidence="1">
    <location>
        <position position="217"/>
    </location>
    <ligand>
        <name>dimethylallyl diphosphate</name>
        <dbReference type="ChEBI" id="CHEBI:57623"/>
    </ligand>
</feature>
<feature type="binding site" evidence="1">
    <location>
        <position position="254"/>
    </location>
    <ligand>
        <name>dimethylallyl diphosphate</name>
        <dbReference type="ChEBI" id="CHEBI:57623"/>
    </ligand>
</feature>
<protein>
    <recommendedName>
        <fullName>Trans-prenyltransferase</fullName>
        <ecNumber>2.5.1.-</ecNumber>
    </recommendedName>
    <alternativeName>
        <fullName>(2E,6E)-farnesyl diphosphate synthase</fullName>
    </alternativeName>
    <alternativeName>
        <fullName>Dimethylallyltranstransferase</fullName>
        <ecNumber>2.5.1.1</ecNumber>
    </alternativeName>
    <alternativeName>
        <fullName>Farnesyl diphosphate synthase</fullName>
    </alternativeName>
    <alternativeName>
        <fullName>Farnesyltranstransferase</fullName>
        <ecNumber>2.5.1.29</ecNumber>
    </alternativeName>
    <alternativeName>
        <fullName>Geranyltranstransferase</fullName>
        <ecNumber>2.5.1.10</ecNumber>
    </alternativeName>
    <alternativeName>
        <fullName>Polyprenyl-diphosphate synthase</fullName>
    </alternativeName>
</protein>
<comment type="function">
    <text evidence="1">Trans-prenyltransferase that catalyzes the sequential condensation of isopentenyl diphosphate (IPP) with different allylic diphosphates, such as dimethylallyl diphosphate (DMAPP), geranyl diphosphate (GPP), farnesyl diphosphate (FPP) and geranylgeranyl diphosphate (GGPP), farnesyl diphosphate being the best allylic substrate.</text>
</comment>
<comment type="catalytic activity">
    <reaction>
        <text>isopentenyl diphosphate + dimethylallyl diphosphate = (2E)-geranyl diphosphate + diphosphate</text>
        <dbReference type="Rhea" id="RHEA:22408"/>
        <dbReference type="ChEBI" id="CHEBI:33019"/>
        <dbReference type="ChEBI" id="CHEBI:57623"/>
        <dbReference type="ChEBI" id="CHEBI:58057"/>
        <dbReference type="ChEBI" id="CHEBI:128769"/>
        <dbReference type="EC" id="2.5.1.1"/>
    </reaction>
</comment>
<comment type="catalytic activity">
    <reaction>
        <text>isopentenyl diphosphate + (2E)-geranyl diphosphate = (2E,6E)-farnesyl diphosphate + diphosphate</text>
        <dbReference type="Rhea" id="RHEA:19361"/>
        <dbReference type="ChEBI" id="CHEBI:33019"/>
        <dbReference type="ChEBI" id="CHEBI:58057"/>
        <dbReference type="ChEBI" id="CHEBI:128769"/>
        <dbReference type="ChEBI" id="CHEBI:175763"/>
        <dbReference type="EC" id="2.5.1.10"/>
    </reaction>
</comment>
<comment type="catalytic activity">
    <reaction>
        <text>isopentenyl diphosphate + (2E,6E)-farnesyl diphosphate = (2E,6E,10E)-geranylgeranyl diphosphate + diphosphate</text>
        <dbReference type="Rhea" id="RHEA:17653"/>
        <dbReference type="ChEBI" id="CHEBI:33019"/>
        <dbReference type="ChEBI" id="CHEBI:58756"/>
        <dbReference type="ChEBI" id="CHEBI:128769"/>
        <dbReference type="ChEBI" id="CHEBI:175763"/>
        <dbReference type="EC" id="2.5.1.29"/>
    </reaction>
</comment>
<comment type="catalytic activity">
    <reaction>
        <text>isopentenyl diphosphate + (2E,6E,10E)-geranylgeranyl diphosphate = (2E,6E,10E,14E)-geranylfarnesyl diphosphate + diphosphate</text>
        <dbReference type="Rhea" id="RHEA:25694"/>
        <dbReference type="ChEBI" id="CHEBI:33019"/>
        <dbReference type="ChEBI" id="CHEBI:57907"/>
        <dbReference type="ChEBI" id="CHEBI:58756"/>
        <dbReference type="ChEBI" id="CHEBI:128769"/>
    </reaction>
</comment>
<comment type="cofactor">
    <cofactor evidence="1">
        <name>Mg(2+)</name>
        <dbReference type="ChEBI" id="CHEBI:18420"/>
    </cofactor>
    <text evidence="1">Binds 2 Mg(2+) ions per subunit.</text>
</comment>
<comment type="pathway">
    <text>Isoprenoid biosynthesis; farnesyl diphosphate biosynthesis; farnesyl diphosphate from geranyl diphosphate and isopentenyl diphosphate: step 1/1.</text>
</comment>
<comment type="pathway">
    <text>Isoprenoid biosynthesis; geranyl diphosphate biosynthesis; geranyl diphosphate from dimethylallyl diphosphate and isopentenyl diphosphate: step 1/1.</text>
</comment>
<comment type="pathway">
    <text>Isoprenoid biosynthesis; geranylgeranyl diphosphate biosynthesis; geranylgeranyl diphosphate from farnesyl diphosphate and isopentenyl diphosphate: step 1/1.</text>
</comment>
<comment type="subcellular location">
    <subcellularLocation>
        <location>Host endoplasmic reticulum</location>
    </subcellularLocation>
    <subcellularLocation>
        <location evidence="1">Host membrane</location>
        <topology evidence="1">Single-pass membrane protein</topology>
    </subcellularLocation>
</comment>
<comment type="induction">
    <text evidence="5">Expressed in the late phase of the viral replicative cycle.</text>
</comment>
<comment type="similarity">
    <text evidence="5">Belongs to the FPP/GGPP synthase family. Asfivirus trans-prenyltransferase subfamily.</text>
</comment>
<sequence>MLHLIYISIIVVLIIILISYTRKPKYFRITAPRSVALFHGIHPLNPKNYKTFSEEFETILNNAIEDGDFKGQLTEPCSYALRGGKYIRPIILMEIVRACQLQHSFGAPIYPAEAALAVEYFHVASLIIDDMPSFDNDVKRRNKDTVWARFGVAKAQMSALALTMQGFQNICRQIDWIKEHCPRFPDPNQLGALLCTFVSHSLNSAGSGQLVDTPEKTIPFFKIAFIMGWVLGTGSVEDIGMIERAAHCFGNAFQLADDIKDHDTDTGWNYAKIHGKRKTFDDVAQFLQECKKILHGKKIYTSIWNEIFQKVINVALGT</sequence>
<name>TPRT_ASFWA</name>
<proteinExistence type="inferred from homology"/>
<organismHost>
    <name type="scientific">Ornithodoros</name>
    <name type="common">relapsing fever ticks</name>
    <dbReference type="NCBI Taxonomy" id="6937"/>
</organismHost>
<organismHost>
    <name type="scientific">Phacochoerus aethiopicus</name>
    <name type="common">Warthog</name>
    <dbReference type="NCBI Taxonomy" id="85517"/>
</organismHost>
<organismHost>
    <name type="scientific">Phacochoerus africanus</name>
    <name type="common">Warthog</name>
    <dbReference type="NCBI Taxonomy" id="41426"/>
</organismHost>
<organismHost>
    <name type="scientific">Potamochoerus larvatus</name>
    <name type="common">Bushpig</name>
    <dbReference type="NCBI Taxonomy" id="273792"/>
</organismHost>
<organismHost>
    <name type="scientific">Sus scrofa</name>
    <name type="common">Pig</name>
    <dbReference type="NCBI Taxonomy" id="9823"/>
</organismHost>
<reference key="1">
    <citation type="submission" date="2003-03" db="EMBL/GenBank/DDBJ databases">
        <title>African swine fever virus genomes.</title>
        <authorList>
            <person name="Kutish G.F."/>
            <person name="Rock D.L."/>
        </authorList>
    </citation>
    <scope>NUCLEOTIDE SEQUENCE [LARGE SCALE GENOMIC DNA]</scope>
</reference>